<protein>
    <recommendedName>
        <fullName>Germinal center-associated signaling and motility-like protein</fullName>
    </recommendedName>
</protein>
<organism>
    <name type="scientific">Homo sapiens</name>
    <name type="common">Human</name>
    <dbReference type="NCBI Taxonomy" id="9606"/>
    <lineage>
        <taxon>Eukaryota</taxon>
        <taxon>Metazoa</taxon>
        <taxon>Chordata</taxon>
        <taxon>Craniata</taxon>
        <taxon>Vertebrata</taxon>
        <taxon>Euteleostomi</taxon>
        <taxon>Mammalia</taxon>
        <taxon>Eutheria</taxon>
        <taxon>Euarchontoglires</taxon>
        <taxon>Primates</taxon>
        <taxon>Haplorrhini</taxon>
        <taxon>Catarrhini</taxon>
        <taxon>Hominidae</taxon>
        <taxon>Homo</taxon>
    </lineage>
</organism>
<proteinExistence type="evidence at protein level"/>
<keyword id="KW-0025">Alternative splicing</keyword>
<keyword id="KW-0175">Coiled coil</keyword>
<keyword id="KW-1267">Proteomics identification</keyword>
<keyword id="KW-1185">Reference proteome</keyword>
<dbReference type="EMBL" id="AK126682">
    <property type="protein sequence ID" value="BAG54358.1"/>
    <property type="molecule type" value="mRNA"/>
</dbReference>
<dbReference type="EMBL" id="AK311994">
    <property type="protein sequence ID" value="BAG34932.1"/>
    <property type="molecule type" value="mRNA"/>
</dbReference>
<dbReference type="EMBL" id="AL606804">
    <property type="status" value="NOT_ANNOTATED_CDS"/>
    <property type="molecule type" value="Genomic_DNA"/>
</dbReference>
<dbReference type="EMBL" id="CH471148">
    <property type="protein sequence ID" value="EAW77193.1"/>
    <property type="molecule type" value="Genomic_DNA"/>
</dbReference>
<dbReference type="EMBL" id="BC024174">
    <property type="protein sequence ID" value="AAH24174.1"/>
    <property type="molecule type" value="mRNA"/>
</dbReference>
<dbReference type="CCDS" id="CCDS1635.1">
    <molecule id="Q5JQS6-1"/>
</dbReference>
<dbReference type="CCDS" id="CCDS60470.1">
    <molecule id="Q5JQS6-2"/>
</dbReference>
<dbReference type="RefSeq" id="NP_001268763.1">
    <molecule id="Q5JQS6-2"/>
    <property type="nucleotide sequence ID" value="NM_001281834.2"/>
</dbReference>
<dbReference type="RefSeq" id="NP_001268764.1">
    <molecule id="Q5JQS6-2"/>
    <property type="nucleotide sequence ID" value="NM_001281835.2"/>
</dbReference>
<dbReference type="RefSeq" id="NP_001268765.1">
    <property type="nucleotide sequence ID" value="NM_001281836.1"/>
</dbReference>
<dbReference type="RefSeq" id="NP_001268766.1">
    <property type="nucleotide sequence ID" value="NM_001281837.1"/>
</dbReference>
<dbReference type="RefSeq" id="NP_001268782.1">
    <molecule id="Q5JQS6-1"/>
    <property type="nucleotide sequence ID" value="NM_001281853.1"/>
</dbReference>
<dbReference type="RefSeq" id="NP_660321.1">
    <molecule id="Q5JQS6-1"/>
    <property type="nucleotide sequence ID" value="NM_145278.5"/>
</dbReference>
<dbReference type="RefSeq" id="XP_016855888.1">
    <property type="nucleotide sequence ID" value="XM_017000399.1"/>
</dbReference>
<dbReference type="RefSeq" id="XP_047302991.1">
    <molecule id="Q5JQS6-1"/>
    <property type="nucleotide sequence ID" value="XM_047447035.1"/>
</dbReference>
<dbReference type="RefSeq" id="XP_047302992.1">
    <molecule id="Q5JQS6-1"/>
    <property type="nucleotide sequence ID" value="XM_047447036.1"/>
</dbReference>
<dbReference type="RefSeq" id="XP_047302993.1">
    <molecule id="Q5JQS6-1"/>
    <property type="nucleotide sequence ID" value="XM_047447037.1"/>
</dbReference>
<dbReference type="RefSeq" id="XP_054190578.1">
    <molecule id="Q5JQS6-1"/>
    <property type="nucleotide sequence ID" value="XM_054334603.1"/>
</dbReference>
<dbReference type="RefSeq" id="XP_054190579.1">
    <molecule id="Q5JQS6-1"/>
    <property type="nucleotide sequence ID" value="XM_054334604.1"/>
</dbReference>
<dbReference type="RefSeq" id="XP_054190580.1">
    <molecule id="Q5JQS6-1"/>
    <property type="nucleotide sequence ID" value="XM_054334605.1"/>
</dbReference>
<dbReference type="BioGRID" id="127173">
    <property type="interactions" value="12"/>
</dbReference>
<dbReference type="FunCoup" id="Q5JQS6">
    <property type="interactions" value="2"/>
</dbReference>
<dbReference type="IntAct" id="Q5JQS6">
    <property type="interactions" value="12"/>
</dbReference>
<dbReference type="STRING" id="9606.ENSP00000446460"/>
<dbReference type="iPTMnet" id="Q5JQS6"/>
<dbReference type="PhosphoSitePlus" id="Q5JQS6"/>
<dbReference type="SwissPalm" id="Q5JQS6"/>
<dbReference type="BioMuta" id="GCSAML"/>
<dbReference type="MassIVE" id="Q5JQS6"/>
<dbReference type="PaxDb" id="9606-ENSP00000446460"/>
<dbReference type="PeptideAtlas" id="Q5JQS6"/>
<dbReference type="ProteomicsDB" id="63057">
    <molecule id="Q5JQS6-1"/>
</dbReference>
<dbReference type="ProteomicsDB" id="63058">
    <molecule id="Q5JQS6-2"/>
</dbReference>
<dbReference type="Antibodypedia" id="34727">
    <property type="antibodies" value="90 antibodies from 17 providers"/>
</dbReference>
<dbReference type="DNASU" id="148823"/>
<dbReference type="Ensembl" id="ENST00000366488.5">
    <molecule id="Q5JQS6-1"/>
    <property type="protein sequence ID" value="ENSP00000355444.4"/>
    <property type="gene ID" value="ENSG00000169224.13"/>
</dbReference>
<dbReference type="Ensembl" id="ENST00000366489.5">
    <molecule id="Q5JQS6-2"/>
    <property type="protein sequence ID" value="ENSP00000355445.1"/>
    <property type="gene ID" value="ENSG00000169224.13"/>
</dbReference>
<dbReference type="Ensembl" id="ENST00000366491.6">
    <molecule id="Q5JQS6-2"/>
    <property type="protein sequence ID" value="ENSP00000355447.2"/>
    <property type="gene ID" value="ENSG00000169224.13"/>
</dbReference>
<dbReference type="Ensembl" id="ENST00000536561.5">
    <molecule id="Q5JQS6-1"/>
    <property type="protein sequence ID" value="ENSP00000446460.2"/>
    <property type="gene ID" value="ENSG00000169224.13"/>
</dbReference>
<dbReference type="GeneID" id="148823"/>
<dbReference type="KEGG" id="hsa:148823"/>
<dbReference type="MANE-Select" id="ENST00000366488.5">
    <property type="protein sequence ID" value="ENSP00000355444.4"/>
    <property type="RefSeq nucleotide sequence ID" value="NM_145278.5"/>
    <property type="RefSeq protein sequence ID" value="NP_660321.1"/>
</dbReference>
<dbReference type="UCSC" id="uc001ida.6">
    <molecule id="Q5JQS6-1"/>
    <property type="organism name" value="human"/>
</dbReference>
<dbReference type="AGR" id="HGNC:29583"/>
<dbReference type="CTD" id="148823"/>
<dbReference type="DisGeNET" id="148823"/>
<dbReference type="GeneCards" id="GCSAML"/>
<dbReference type="HGNC" id="HGNC:29583">
    <property type="gene designation" value="GCSAML"/>
</dbReference>
<dbReference type="HPA" id="ENSG00000169224">
    <property type="expression patterns" value="Tissue enhanced (brain, prostate)"/>
</dbReference>
<dbReference type="neXtProt" id="NX_Q5JQS6"/>
<dbReference type="OpenTargets" id="ENSG00000169224"/>
<dbReference type="PharmGKB" id="PA142672467"/>
<dbReference type="VEuPathDB" id="HostDB:ENSG00000169224"/>
<dbReference type="eggNOG" id="ENOG502T9FX">
    <property type="taxonomic scope" value="Eukaryota"/>
</dbReference>
<dbReference type="GeneTree" id="ENSGT00940000158134"/>
<dbReference type="HOGENOM" id="CLU_155984_0_0_1"/>
<dbReference type="InParanoid" id="Q5JQS6"/>
<dbReference type="OMA" id="KWQEMTA"/>
<dbReference type="OrthoDB" id="9835681at2759"/>
<dbReference type="PAN-GO" id="Q5JQS6">
    <property type="GO annotations" value="0 GO annotations based on evolutionary models"/>
</dbReference>
<dbReference type="PhylomeDB" id="Q5JQS6"/>
<dbReference type="TreeFam" id="TF338596"/>
<dbReference type="PathwayCommons" id="Q5JQS6"/>
<dbReference type="SignaLink" id="Q5JQS6"/>
<dbReference type="BioGRID-ORCS" id="148823">
    <property type="hits" value="21 hits in 1151 CRISPR screens"/>
</dbReference>
<dbReference type="ChiTaRS" id="GCSAML">
    <property type="organism name" value="human"/>
</dbReference>
<dbReference type="GenomeRNAi" id="148823"/>
<dbReference type="Pharos" id="Q5JQS6">
    <property type="development level" value="Tdark"/>
</dbReference>
<dbReference type="PRO" id="PR:Q5JQS6"/>
<dbReference type="Proteomes" id="UP000005640">
    <property type="component" value="Chromosome 1"/>
</dbReference>
<dbReference type="RNAct" id="Q5JQS6">
    <property type="molecule type" value="protein"/>
</dbReference>
<dbReference type="Bgee" id="ENSG00000169224">
    <property type="expression patterns" value="Expressed in buccal mucosa cell and 99 other cell types or tissues"/>
</dbReference>
<dbReference type="ExpressionAtlas" id="Q5JQS6">
    <property type="expression patterns" value="baseline and differential"/>
</dbReference>
<dbReference type="GO" id="GO:0050855">
    <property type="term" value="P:regulation of B cell receptor signaling pathway"/>
    <property type="evidence" value="ECO:0007669"/>
    <property type="project" value="InterPro"/>
</dbReference>
<dbReference type="GO" id="GO:2000401">
    <property type="term" value="P:regulation of lymphocyte migration"/>
    <property type="evidence" value="ECO:0007669"/>
    <property type="project" value="InterPro"/>
</dbReference>
<dbReference type="InterPro" id="IPR031364">
    <property type="entry name" value="GC_assoc_lym"/>
</dbReference>
<dbReference type="PANTHER" id="PTHR35351">
    <property type="entry name" value="GERMINAL CENTER-ASSOCIATED SIGNALING AND MOTILITY-LIKE PROTEIN"/>
    <property type="match status" value="1"/>
</dbReference>
<dbReference type="PANTHER" id="PTHR35351:SF1">
    <property type="entry name" value="GERMINAL CENTER-ASSOCIATED SIGNALING AND MOTILITY-LIKE PROTEIN"/>
    <property type="match status" value="1"/>
</dbReference>
<dbReference type="Pfam" id="PF15666">
    <property type="entry name" value="HGAL"/>
    <property type="match status" value="1"/>
</dbReference>
<comment type="interaction">
    <interactant intactId="EBI-17857617">
        <id>Q5JQS6</id>
    </interactant>
    <interactant intactId="EBI-769261">
        <id>Q96JC9</id>
        <label>EAF1</label>
    </interactant>
    <organismsDiffer>false</organismsDiffer>
    <experiments>3</experiments>
</comment>
<comment type="interaction">
    <interactant intactId="EBI-17857617">
        <id>Q5JQS6</id>
    </interactant>
    <interactant intactId="EBI-750700">
        <id>Q8N9N8</id>
        <label>EIF1AD</label>
    </interactant>
    <organismsDiffer>false</organismsDiffer>
    <experiments>3</experiments>
</comment>
<comment type="interaction">
    <interactant intactId="EBI-17857617">
        <id>Q5JQS6</id>
    </interactant>
    <interactant intactId="EBI-6658203">
        <id>Q86YD7</id>
        <label>FAM90A1</label>
    </interactant>
    <organismsDiffer>false</organismsDiffer>
    <experiments>3</experiments>
</comment>
<comment type="interaction">
    <interactant intactId="EBI-17857617">
        <id>Q5JQS6</id>
    </interactant>
    <interactant intactId="EBI-741158">
        <id>Q96HA8</id>
        <label>NTAQ1</label>
    </interactant>
    <organismsDiffer>false</organismsDiffer>
    <experiments>3</experiments>
</comment>
<comment type="interaction">
    <interactant intactId="EBI-17857617">
        <id>Q5JQS6</id>
    </interactant>
    <interactant intactId="EBI-1053424">
        <id>O43741</id>
        <label>PRKAB2</label>
    </interactant>
    <organismsDiffer>false</organismsDiffer>
    <experiments>3</experiments>
</comment>
<comment type="interaction">
    <interactant intactId="EBI-17857617">
        <id>Q5JQS6</id>
    </interactant>
    <interactant intactId="EBI-745021">
        <id>Q96FJ0</id>
        <label>STAMBPL1</label>
    </interactant>
    <organismsDiffer>false</organismsDiffer>
    <experiments>3</experiments>
</comment>
<comment type="interaction">
    <interactant intactId="EBI-17857617">
        <id>Q5JQS6</id>
    </interactant>
    <interactant intactId="EBI-607755">
        <id>Q9BZL1</id>
        <label>UBL5</label>
    </interactant>
    <organismsDiffer>false</organismsDiffer>
    <experiments>3</experiments>
</comment>
<comment type="alternative products">
    <event type="alternative splicing"/>
    <isoform>
        <id>Q5JQS6-1</id>
        <name>1</name>
        <sequence type="displayed"/>
    </isoform>
    <isoform>
        <id>Q5JQS6-2</id>
        <name>2</name>
        <sequence type="described" ref="VSP_026612"/>
    </isoform>
</comment>
<gene>
    <name type="primary">GCSAML</name>
    <name type="synonym">C1orf150</name>
</gene>
<accession>Q5JQS6</accession>
<accession>B2R4Y5</accession>
<accession>B3KX46</accession>
<accession>Q5JQT3</accession>
<feature type="chain" id="PRO_0000294242" description="Germinal center-associated signaling and motility-like protein">
    <location>
        <begin position="1"/>
        <end position="135"/>
    </location>
</feature>
<feature type="region of interest" description="Disordered" evidence="2">
    <location>
        <begin position="1"/>
        <end position="68"/>
    </location>
</feature>
<feature type="coiled-coil region" evidence="1">
    <location>
        <begin position="26"/>
        <end position="50"/>
    </location>
</feature>
<feature type="compositionally biased region" description="Basic and acidic residues" evidence="2">
    <location>
        <begin position="22"/>
        <end position="48"/>
    </location>
</feature>
<feature type="compositionally biased region" description="Low complexity" evidence="2">
    <location>
        <begin position="51"/>
        <end position="66"/>
    </location>
</feature>
<feature type="splice variant" id="VSP_026612" description="In isoform 2." evidence="3">
    <location>
        <begin position="10"/>
        <end position="29"/>
    </location>
</feature>
<sequence>MGNYLLRKLSCLGENQKKPKKGNPDEERKRQEMTTFERKLQDQDKKSQEVSSTSNQENENGSGSEEVCYTVINHIPHQRSSLSSNDDGYENIDSLTRKVRQFRERSETEYALLRTSVSRPCSCTHEHDYEVVFPH</sequence>
<name>GSAML_HUMAN</name>
<evidence type="ECO:0000255" key="1"/>
<evidence type="ECO:0000256" key="2">
    <source>
        <dbReference type="SAM" id="MobiDB-lite"/>
    </source>
</evidence>
<evidence type="ECO:0000303" key="3">
    <source>
    </source>
</evidence>
<reference key="1">
    <citation type="journal article" date="2004" name="Nat. Genet.">
        <title>Complete sequencing and characterization of 21,243 full-length human cDNAs.</title>
        <authorList>
            <person name="Ota T."/>
            <person name="Suzuki Y."/>
            <person name="Nishikawa T."/>
            <person name="Otsuki T."/>
            <person name="Sugiyama T."/>
            <person name="Irie R."/>
            <person name="Wakamatsu A."/>
            <person name="Hayashi K."/>
            <person name="Sato H."/>
            <person name="Nagai K."/>
            <person name="Kimura K."/>
            <person name="Makita H."/>
            <person name="Sekine M."/>
            <person name="Obayashi M."/>
            <person name="Nishi T."/>
            <person name="Shibahara T."/>
            <person name="Tanaka T."/>
            <person name="Ishii S."/>
            <person name="Yamamoto J."/>
            <person name="Saito K."/>
            <person name="Kawai Y."/>
            <person name="Isono Y."/>
            <person name="Nakamura Y."/>
            <person name="Nagahari K."/>
            <person name="Murakami K."/>
            <person name="Yasuda T."/>
            <person name="Iwayanagi T."/>
            <person name="Wagatsuma M."/>
            <person name="Shiratori A."/>
            <person name="Sudo H."/>
            <person name="Hosoiri T."/>
            <person name="Kaku Y."/>
            <person name="Kodaira H."/>
            <person name="Kondo H."/>
            <person name="Sugawara M."/>
            <person name="Takahashi M."/>
            <person name="Kanda K."/>
            <person name="Yokoi T."/>
            <person name="Furuya T."/>
            <person name="Kikkawa E."/>
            <person name="Omura Y."/>
            <person name="Abe K."/>
            <person name="Kamihara K."/>
            <person name="Katsuta N."/>
            <person name="Sato K."/>
            <person name="Tanikawa M."/>
            <person name="Yamazaki M."/>
            <person name="Ninomiya K."/>
            <person name="Ishibashi T."/>
            <person name="Yamashita H."/>
            <person name="Murakawa K."/>
            <person name="Fujimori K."/>
            <person name="Tanai H."/>
            <person name="Kimata M."/>
            <person name="Watanabe M."/>
            <person name="Hiraoka S."/>
            <person name="Chiba Y."/>
            <person name="Ishida S."/>
            <person name="Ono Y."/>
            <person name="Takiguchi S."/>
            <person name="Watanabe S."/>
            <person name="Yosida M."/>
            <person name="Hotuta T."/>
            <person name="Kusano J."/>
            <person name="Kanehori K."/>
            <person name="Takahashi-Fujii A."/>
            <person name="Hara H."/>
            <person name="Tanase T.-O."/>
            <person name="Nomura Y."/>
            <person name="Togiya S."/>
            <person name="Komai F."/>
            <person name="Hara R."/>
            <person name="Takeuchi K."/>
            <person name="Arita M."/>
            <person name="Imose N."/>
            <person name="Musashino K."/>
            <person name="Yuuki H."/>
            <person name="Oshima A."/>
            <person name="Sasaki N."/>
            <person name="Aotsuka S."/>
            <person name="Yoshikawa Y."/>
            <person name="Matsunawa H."/>
            <person name="Ichihara T."/>
            <person name="Shiohata N."/>
            <person name="Sano S."/>
            <person name="Moriya S."/>
            <person name="Momiyama H."/>
            <person name="Satoh N."/>
            <person name="Takami S."/>
            <person name="Terashima Y."/>
            <person name="Suzuki O."/>
            <person name="Nakagawa S."/>
            <person name="Senoh A."/>
            <person name="Mizoguchi H."/>
            <person name="Goto Y."/>
            <person name="Shimizu F."/>
            <person name="Wakebe H."/>
            <person name="Hishigaki H."/>
            <person name="Watanabe T."/>
            <person name="Sugiyama A."/>
            <person name="Takemoto M."/>
            <person name="Kawakami B."/>
            <person name="Yamazaki M."/>
            <person name="Watanabe K."/>
            <person name="Kumagai A."/>
            <person name="Itakura S."/>
            <person name="Fukuzumi Y."/>
            <person name="Fujimori Y."/>
            <person name="Komiyama M."/>
            <person name="Tashiro H."/>
            <person name="Tanigami A."/>
            <person name="Fujiwara T."/>
            <person name="Ono T."/>
            <person name="Yamada K."/>
            <person name="Fujii Y."/>
            <person name="Ozaki K."/>
            <person name="Hirao M."/>
            <person name="Ohmori Y."/>
            <person name="Kawabata A."/>
            <person name="Hikiji T."/>
            <person name="Kobatake N."/>
            <person name="Inagaki H."/>
            <person name="Ikema Y."/>
            <person name="Okamoto S."/>
            <person name="Okitani R."/>
            <person name="Kawakami T."/>
            <person name="Noguchi S."/>
            <person name="Itoh T."/>
            <person name="Shigeta K."/>
            <person name="Senba T."/>
            <person name="Matsumura K."/>
            <person name="Nakajima Y."/>
            <person name="Mizuno T."/>
            <person name="Morinaga M."/>
            <person name="Sasaki M."/>
            <person name="Togashi T."/>
            <person name="Oyama M."/>
            <person name="Hata H."/>
            <person name="Watanabe M."/>
            <person name="Komatsu T."/>
            <person name="Mizushima-Sugano J."/>
            <person name="Satoh T."/>
            <person name="Shirai Y."/>
            <person name="Takahashi Y."/>
            <person name="Nakagawa K."/>
            <person name="Okumura K."/>
            <person name="Nagase T."/>
            <person name="Nomura N."/>
            <person name="Kikuchi H."/>
            <person name="Masuho Y."/>
            <person name="Yamashita R."/>
            <person name="Nakai K."/>
            <person name="Yada T."/>
            <person name="Nakamura Y."/>
            <person name="Ohara O."/>
            <person name="Isogai T."/>
            <person name="Sugano S."/>
        </authorList>
    </citation>
    <scope>NUCLEOTIDE SEQUENCE [LARGE SCALE MRNA] (ISOFORMS 1 AND 2)</scope>
    <source>
        <tissue>Cerebellum</tissue>
        <tissue>Trachea</tissue>
    </source>
</reference>
<reference key="2">
    <citation type="journal article" date="2006" name="Nature">
        <title>The DNA sequence and biological annotation of human chromosome 1.</title>
        <authorList>
            <person name="Gregory S.G."/>
            <person name="Barlow K.F."/>
            <person name="McLay K.E."/>
            <person name="Kaul R."/>
            <person name="Swarbreck D."/>
            <person name="Dunham A."/>
            <person name="Scott C.E."/>
            <person name="Howe K.L."/>
            <person name="Woodfine K."/>
            <person name="Spencer C.C.A."/>
            <person name="Jones M.C."/>
            <person name="Gillson C."/>
            <person name="Searle S."/>
            <person name="Zhou Y."/>
            <person name="Kokocinski F."/>
            <person name="McDonald L."/>
            <person name="Evans R."/>
            <person name="Phillips K."/>
            <person name="Atkinson A."/>
            <person name="Cooper R."/>
            <person name="Jones C."/>
            <person name="Hall R.E."/>
            <person name="Andrews T.D."/>
            <person name="Lloyd C."/>
            <person name="Ainscough R."/>
            <person name="Almeida J.P."/>
            <person name="Ambrose K.D."/>
            <person name="Anderson F."/>
            <person name="Andrew R.W."/>
            <person name="Ashwell R.I.S."/>
            <person name="Aubin K."/>
            <person name="Babbage A.K."/>
            <person name="Bagguley C.L."/>
            <person name="Bailey J."/>
            <person name="Beasley H."/>
            <person name="Bethel G."/>
            <person name="Bird C.P."/>
            <person name="Bray-Allen S."/>
            <person name="Brown J.Y."/>
            <person name="Brown A.J."/>
            <person name="Buckley D."/>
            <person name="Burton J."/>
            <person name="Bye J."/>
            <person name="Carder C."/>
            <person name="Chapman J.C."/>
            <person name="Clark S.Y."/>
            <person name="Clarke G."/>
            <person name="Clee C."/>
            <person name="Cobley V."/>
            <person name="Collier R.E."/>
            <person name="Corby N."/>
            <person name="Coville G.J."/>
            <person name="Davies J."/>
            <person name="Deadman R."/>
            <person name="Dunn M."/>
            <person name="Earthrowl M."/>
            <person name="Ellington A.G."/>
            <person name="Errington H."/>
            <person name="Frankish A."/>
            <person name="Frankland J."/>
            <person name="French L."/>
            <person name="Garner P."/>
            <person name="Garnett J."/>
            <person name="Gay L."/>
            <person name="Ghori M.R.J."/>
            <person name="Gibson R."/>
            <person name="Gilby L.M."/>
            <person name="Gillett W."/>
            <person name="Glithero R.J."/>
            <person name="Grafham D.V."/>
            <person name="Griffiths C."/>
            <person name="Griffiths-Jones S."/>
            <person name="Grocock R."/>
            <person name="Hammond S."/>
            <person name="Harrison E.S.I."/>
            <person name="Hart E."/>
            <person name="Haugen E."/>
            <person name="Heath P.D."/>
            <person name="Holmes S."/>
            <person name="Holt K."/>
            <person name="Howden P.J."/>
            <person name="Hunt A.R."/>
            <person name="Hunt S.E."/>
            <person name="Hunter G."/>
            <person name="Isherwood J."/>
            <person name="James R."/>
            <person name="Johnson C."/>
            <person name="Johnson D."/>
            <person name="Joy A."/>
            <person name="Kay M."/>
            <person name="Kershaw J.K."/>
            <person name="Kibukawa M."/>
            <person name="Kimberley A.M."/>
            <person name="King A."/>
            <person name="Knights A.J."/>
            <person name="Lad H."/>
            <person name="Laird G."/>
            <person name="Lawlor S."/>
            <person name="Leongamornlert D.A."/>
            <person name="Lloyd D.M."/>
            <person name="Loveland J."/>
            <person name="Lovell J."/>
            <person name="Lush M.J."/>
            <person name="Lyne R."/>
            <person name="Martin S."/>
            <person name="Mashreghi-Mohammadi M."/>
            <person name="Matthews L."/>
            <person name="Matthews N.S.W."/>
            <person name="McLaren S."/>
            <person name="Milne S."/>
            <person name="Mistry S."/>
            <person name="Moore M.J.F."/>
            <person name="Nickerson T."/>
            <person name="O'Dell C.N."/>
            <person name="Oliver K."/>
            <person name="Palmeiri A."/>
            <person name="Palmer S.A."/>
            <person name="Parker A."/>
            <person name="Patel D."/>
            <person name="Pearce A.V."/>
            <person name="Peck A.I."/>
            <person name="Pelan S."/>
            <person name="Phelps K."/>
            <person name="Phillimore B.J."/>
            <person name="Plumb R."/>
            <person name="Rajan J."/>
            <person name="Raymond C."/>
            <person name="Rouse G."/>
            <person name="Saenphimmachak C."/>
            <person name="Sehra H.K."/>
            <person name="Sheridan E."/>
            <person name="Shownkeen R."/>
            <person name="Sims S."/>
            <person name="Skuce C.D."/>
            <person name="Smith M."/>
            <person name="Steward C."/>
            <person name="Subramanian S."/>
            <person name="Sycamore N."/>
            <person name="Tracey A."/>
            <person name="Tromans A."/>
            <person name="Van Helmond Z."/>
            <person name="Wall M."/>
            <person name="Wallis J.M."/>
            <person name="White S."/>
            <person name="Whitehead S.L."/>
            <person name="Wilkinson J.E."/>
            <person name="Willey D.L."/>
            <person name="Williams H."/>
            <person name="Wilming L."/>
            <person name="Wray P.W."/>
            <person name="Wu Z."/>
            <person name="Coulson A."/>
            <person name="Vaudin M."/>
            <person name="Sulston J.E."/>
            <person name="Durbin R.M."/>
            <person name="Hubbard T."/>
            <person name="Wooster R."/>
            <person name="Dunham I."/>
            <person name="Carter N.P."/>
            <person name="McVean G."/>
            <person name="Ross M.T."/>
            <person name="Harrow J."/>
            <person name="Olson M.V."/>
            <person name="Beck S."/>
            <person name="Rogers J."/>
            <person name="Bentley D.R."/>
        </authorList>
    </citation>
    <scope>NUCLEOTIDE SEQUENCE [LARGE SCALE GENOMIC DNA]</scope>
</reference>
<reference key="3">
    <citation type="submission" date="2005-07" db="EMBL/GenBank/DDBJ databases">
        <authorList>
            <person name="Mural R.J."/>
            <person name="Istrail S."/>
            <person name="Sutton G.G."/>
            <person name="Florea L."/>
            <person name="Halpern A.L."/>
            <person name="Mobarry C.M."/>
            <person name="Lippert R."/>
            <person name="Walenz B."/>
            <person name="Shatkay H."/>
            <person name="Dew I."/>
            <person name="Miller J.R."/>
            <person name="Flanigan M.J."/>
            <person name="Edwards N.J."/>
            <person name="Bolanos R."/>
            <person name="Fasulo D."/>
            <person name="Halldorsson B.V."/>
            <person name="Hannenhalli S."/>
            <person name="Turner R."/>
            <person name="Yooseph S."/>
            <person name="Lu F."/>
            <person name="Nusskern D.R."/>
            <person name="Shue B.C."/>
            <person name="Zheng X.H."/>
            <person name="Zhong F."/>
            <person name="Delcher A.L."/>
            <person name="Huson D.H."/>
            <person name="Kravitz S.A."/>
            <person name="Mouchard L."/>
            <person name="Reinert K."/>
            <person name="Remington K.A."/>
            <person name="Clark A.G."/>
            <person name="Waterman M.S."/>
            <person name="Eichler E.E."/>
            <person name="Adams M.D."/>
            <person name="Hunkapiller M.W."/>
            <person name="Myers E.W."/>
            <person name="Venter J.C."/>
        </authorList>
    </citation>
    <scope>NUCLEOTIDE SEQUENCE [LARGE SCALE GENOMIC DNA]</scope>
</reference>
<reference key="4">
    <citation type="journal article" date="2004" name="Genome Res.">
        <title>The status, quality, and expansion of the NIH full-length cDNA project: the Mammalian Gene Collection (MGC).</title>
        <authorList>
            <consortium name="The MGC Project Team"/>
        </authorList>
    </citation>
    <scope>NUCLEOTIDE SEQUENCE [LARGE SCALE MRNA] (ISOFORM 1)</scope>
    <source>
        <tissue>Bone marrow</tissue>
    </source>
</reference>